<sequence>MGPMRTIVYADGGCDPNPGPGGWAAVIQAPTGTIELYGGELATTNNRMELTAAIRALEHFPEGAAIEMRCDSQYVVKSVTEWMRGWKARGWRTATGPVKNIDLMQRLDALAAARDVRWTWVRGHAGEAGNERADRLATLGRREALSGKTSGEAMPLPADAAPALAPAQPVQSKTVQVALSADLANALSRAAGRAGITPQAYLEDAVRLALELKPPGVARVRAELQKAS</sequence>
<dbReference type="EC" id="3.1.26.4" evidence="1"/>
<dbReference type="EMBL" id="CP000908">
    <property type="protein sequence ID" value="ABY29341.1"/>
    <property type="molecule type" value="Genomic_DNA"/>
</dbReference>
<dbReference type="SMR" id="A9W185"/>
<dbReference type="KEGG" id="mex:Mext_0936"/>
<dbReference type="eggNOG" id="COG0328">
    <property type="taxonomic scope" value="Bacteria"/>
</dbReference>
<dbReference type="HOGENOM" id="CLU_030894_7_0_5"/>
<dbReference type="GO" id="GO:0005737">
    <property type="term" value="C:cytoplasm"/>
    <property type="evidence" value="ECO:0007669"/>
    <property type="project" value="UniProtKB-SubCell"/>
</dbReference>
<dbReference type="GO" id="GO:0000287">
    <property type="term" value="F:magnesium ion binding"/>
    <property type="evidence" value="ECO:0007669"/>
    <property type="project" value="UniProtKB-UniRule"/>
</dbReference>
<dbReference type="GO" id="GO:0003676">
    <property type="term" value="F:nucleic acid binding"/>
    <property type="evidence" value="ECO:0007669"/>
    <property type="project" value="InterPro"/>
</dbReference>
<dbReference type="GO" id="GO:0004523">
    <property type="term" value="F:RNA-DNA hybrid ribonuclease activity"/>
    <property type="evidence" value="ECO:0007669"/>
    <property type="project" value="UniProtKB-UniRule"/>
</dbReference>
<dbReference type="GO" id="GO:0043137">
    <property type="term" value="P:DNA replication, removal of RNA primer"/>
    <property type="evidence" value="ECO:0007669"/>
    <property type="project" value="TreeGrafter"/>
</dbReference>
<dbReference type="CDD" id="cd21631">
    <property type="entry name" value="RHH_CopG_NikR-like"/>
    <property type="match status" value="1"/>
</dbReference>
<dbReference type="CDD" id="cd09278">
    <property type="entry name" value="RNase_HI_prokaryote_like"/>
    <property type="match status" value="1"/>
</dbReference>
<dbReference type="Gene3D" id="3.30.420.10">
    <property type="entry name" value="Ribonuclease H-like superfamily/Ribonuclease H"/>
    <property type="match status" value="1"/>
</dbReference>
<dbReference type="HAMAP" id="MF_00042">
    <property type="entry name" value="RNase_H"/>
    <property type="match status" value="1"/>
</dbReference>
<dbReference type="InterPro" id="IPR050092">
    <property type="entry name" value="RNase_H"/>
</dbReference>
<dbReference type="InterPro" id="IPR012337">
    <property type="entry name" value="RNaseH-like_sf"/>
</dbReference>
<dbReference type="InterPro" id="IPR002156">
    <property type="entry name" value="RNaseH_domain"/>
</dbReference>
<dbReference type="InterPro" id="IPR036397">
    <property type="entry name" value="RNaseH_sf"/>
</dbReference>
<dbReference type="InterPro" id="IPR022892">
    <property type="entry name" value="RNaseHI"/>
</dbReference>
<dbReference type="NCBIfam" id="NF001236">
    <property type="entry name" value="PRK00203.1"/>
    <property type="match status" value="1"/>
</dbReference>
<dbReference type="PANTHER" id="PTHR10642">
    <property type="entry name" value="RIBONUCLEASE H1"/>
    <property type="match status" value="1"/>
</dbReference>
<dbReference type="PANTHER" id="PTHR10642:SF26">
    <property type="entry name" value="RIBONUCLEASE H1"/>
    <property type="match status" value="1"/>
</dbReference>
<dbReference type="Pfam" id="PF00075">
    <property type="entry name" value="RNase_H"/>
    <property type="match status" value="1"/>
</dbReference>
<dbReference type="SUPFAM" id="SSF53098">
    <property type="entry name" value="Ribonuclease H-like"/>
    <property type="match status" value="1"/>
</dbReference>
<dbReference type="PROSITE" id="PS50879">
    <property type="entry name" value="RNASE_H_1"/>
    <property type="match status" value="1"/>
</dbReference>
<comment type="function">
    <text evidence="1">Endonuclease that specifically degrades the RNA of RNA-DNA hybrids.</text>
</comment>
<comment type="catalytic activity">
    <reaction evidence="1">
        <text>Endonucleolytic cleavage to 5'-phosphomonoester.</text>
        <dbReference type="EC" id="3.1.26.4"/>
    </reaction>
</comment>
<comment type="cofactor">
    <cofactor evidence="1">
        <name>Mg(2+)</name>
        <dbReference type="ChEBI" id="CHEBI:18420"/>
    </cofactor>
    <text evidence="1">Binds 1 Mg(2+) ion per subunit. May bind a second metal ion at a regulatory site, or after substrate binding.</text>
</comment>
<comment type="subunit">
    <text evidence="1">Monomer.</text>
</comment>
<comment type="subcellular location">
    <subcellularLocation>
        <location evidence="1">Cytoplasm</location>
    </subcellularLocation>
</comment>
<comment type="similarity">
    <text evidence="1">Belongs to the RNase H family.</text>
</comment>
<evidence type="ECO:0000255" key="1">
    <source>
        <dbReference type="HAMAP-Rule" id="MF_00042"/>
    </source>
</evidence>
<evidence type="ECO:0000255" key="2">
    <source>
        <dbReference type="PROSITE-ProRule" id="PRU00408"/>
    </source>
</evidence>
<feature type="chain" id="PRO_1000090904" description="Ribonuclease H">
    <location>
        <begin position="1"/>
        <end position="228"/>
    </location>
</feature>
<feature type="domain" description="RNase H type-1" evidence="2">
    <location>
        <begin position="2"/>
        <end position="142"/>
    </location>
</feature>
<feature type="binding site" evidence="1">
    <location>
        <position position="11"/>
    </location>
    <ligand>
        <name>Mg(2+)</name>
        <dbReference type="ChEBI" id="CHEBI:18420"/>
        <label>1</label>
    </ligand>
</feature>
<feature type="binding site" evidence="1">
    <location>
        <position position="11"/>
    </location>
    <ligand>
        <name>Mg(2+)</name>
        <dbReference type="ChEBI" id="CHEBI:18420"/>
        <label>2</label>
    </ligand>
</feature>
<feature type="binding site" evidence="1">
    <location>
        <position position="49"/>
    </location>
    <ligand>
        <name>Mg(2+)</name>
        <dbReference type="ChEBI" id="CHEBI:18420"/>
        <label>1</label>
    </ligand>
</feature>
<feature type="binding site" evidence="1">
    <location>
        <position position="71"/>
    </location>
    <ligand>
        <name>Mg(2+)</name>
        <dbReference type="ChEBI" id="CHEBI:18420"/>
        <label>1</label>
    </ligand>
</feature>
<feature type="binding site" evidence="1">
    <location>
        <position position="134"/>
    </location>
    <ligand>
        <name>Mg(2+)</name>
        <dbReference type="ChEBI" id="CHEBI:18420"/>
        <label>2</label>
    </ligand>
</feature>
<reference key="1">
    <citation type="submission" date="2007-12" db="EMBL/GenBank/DDBJ databases">
        <title>Complete sequence of Methylobacterium extorquens PA1.</title>
        <authorList>
            <consortium name="US DOE Joint Genome Institute"/>
            <person name="Copeland A."/>
            <person name="Lucas S."/>
            <person name="Lapidus A."/>
            <person name="Barry K."/>
            <person name="Glavina del Rio T."/>
            <person name="Dalin E."/>
            <person name="Tice H."/>
            <person name="Pitluck S."/>
            <person name="Saunders E."/>
            <person name="Brettin T."/>
            <person name="Bruce D."/>
            <person name="Detter J.C."/>
            <person name="Han C."/>
            <person name="Schmutz J."/>
            <person name="Larimer F."/>
            <person name="Land M."/>
            <person name="Hauser L."/>
            <person name="Kyrpides N."/>
            <person name="Kim E."/>
            <person name="Marx C."/>
            <person name="Richardson P."/>
        </authorList>
    </citation>
    <scope>NUCLEOTIDE SEQUENCE [LARGE SCALE GENOMIC DNA]</scope>
    <source>
        <strain>PA1</strain>
    </source>
</reference>
<gene>
    <name evidence="1" type="primary">rnhA</name>
    <name type="ordered locus">Mext_0936</name>
</gene>
<proteinExistence type="inferred from homology"/>
<protein>
    <recommendedName>
        <fullName evidence="1">Ribonuclease H</fullName>
        <shortName evidence="1">RNase H</shortName>
        <ecNumber evidence="1">3.1.26.4</ecNumber>
    </recommendedName>
</protein>
<accession>A9W185</accession>
<name>RNH_METEP</name>
<keyword id="KW-0963">Cytoplasm</keyword>
<keyword id="KW-0255">Endonuclease</keyword>
<keyword id="KW-0378">Hydrolase</keyword>
<keyword id="KW-0460">Magnesium</keyword>
<keyword id="KW-0479">Metal-binding</keyword>
<keyword id="KW-0540">Nuclease</keyword>
<organism>
    <name type="scientific">Methylorubrum extorquens (strain PA1)</name>
    <name type="common">Methylobacterium extorquens</name>
    <dbReference type="NCBI Taxonomy" id="419610"/>
    <lineage>
        <taxon>Bacteria</taxon>
        <taxon>Pseudomonadati</taxon>
        <taxon>Pseudomonadota</taxon>
        <taxon>Alphaproteobacteria</taxon>
        <taxon>Hyphomicrobiales</taxon>
        <taxon>Methylobacteriaceae</taxon>
        <taxon>Methylorubrum</taxon>
    </lineage>
</organism>